<evidence type="ECO:0000255" key="1">
    <source>
        <dbReference type="HAMAP-Rule" id="MF_01588"/>
    </source>
</evidence>
<reference key="1">
    <citation type="submission" date="2006-03" db="EMBL/GenBank/DDBJ databases">
        <title>Complete genome sequence of Francisella tularensis LVS (Live Vaccine Strain).</title>
        <authorList>
            <person name="Chain P."/>
            <person name="Larimer F."/>
            <person name="Land M."/>
            <person name="Stilwagen S."/>
            <person name="Larsson P."/>
            <person name="Bearden S."/>
            <person name="Chu M."/>
            <person name="Oyston P."/>
            <person name="Forsman M."/>
            <person name="Andersson S."/>
            <person name="Lindler L."/>
            <person name="Titball R."/>
            <person name="Garcia E."/>
        </authorList>
    </citation>
    <scope>NUCLEOTIDE SEQUENCE [LARGE SCALE GENOMIC DNA]</scope>
    <source>
        <strain>LVS</strain>
    </source>
</reference>
<keyword id="KW-0227">DNA damage</keyword>
<keyword id="KW-0234">DNA repair</keyword>
<keyword id="KW-0235">DNA replication</keyword>
<keyword id="KW-0436">Ligase</keyword>
<keyword id="KW-0460">Magnesium</keyword>
<keyword id="KW-0464">Manganese</keyword>
<keyword id="KW-0479">Metal-binding</keyword>
<keyword id="KW-0520">NAD</keyword>
<keyword id="KW-1185">Reference proteome</keyword>
<keyword id="KW-0862">Zinc</keyword>
<gene>
    <name evidence="1" type="primary">ligA</name>
    <name type="ordered locus">FTL_0676</name>
</gene>
<protein>
    <recommendedName>
        <fullName evidence="1">DNA ligase</fullName>
        <ecNumber evidence="1">6.5.1.2</ecNumber>
    </recommendedName>
    <alternativeName>
        <fullName evidence="1">Polydeoxyribonucleotide synthase [NAD(+)]</fullName>
    </alternativeName>
</protein>
<comment type="function">
    <text evidence="1">DNA ligase that catalyzes the formation of phosphodiester linkages between 5'-phosphoryl and 3'-hydroxyl groups in double-stranded DNA using NAD as a coenzyme and as the energy source for the reaction. It is essential for DNA replication and repair of damaged DNA.</text>
</comment>
<comment type="catalytic activity">
    <reaction evidence="1">
        <text>NAD(+) + (deoxyribonucleotide)n-3'-hydroxyl + 5'-phospho-(deoxyribonucleotide)m = (deoxyribonucleotide)n+m + AMP + beta-nicotinamide D-nucleotide.</text>
        <dbReference type="EC" id="6.5.1.2"/>
    </reaction>
</comment>
<comment type="cofactor">
    <cofactor evidence="1">
        <name>Mg(2+)</name>
        <dbReference type="ChEBI" id="CHEBI:18420"/>
    </cofactor>
    <cofactor evidence="1">
        <name>Mn(2+)</name>
        <dbReference type="ChEBI" id="CHEBI:29035"/>
    </cofactor>
</comment>
<comment type="similarity">
    <text evidence="1">Belongs to the NAD-dependent DNA ligase family. LigA subfamily.</text>
</comment>
<name>DNLJ_FRATH</name>
<feature type="chain" id="PRO_0000313238" description="DNA ligase">
    <location>
        <begin position="1"/>
        <end position="678"/>
    </location>
</feature>
<feature type="domain" description="BRCT" evidence="1">
    <location>
        <begin position="602"/>
        <end position="678"/>
    </location>
</feature>
<feature type="active site" description="N6-AMP-lysine intermediate" evidence="1">
    <location>
        <position position="124"/>
    </location>
</feature>
<feature type="binding site" evidence="1">
    <location>
        <begin position="47"/>
        <end position="51"/>
    </location>
    <ligand>
        <name>NAD(+)</name>
        <dbReference type="ChEBI" id="CHEBI:57540"/>
    </ligand>
</feature>
<feature type="binding site" evidence="1">
    <location>
        <begin position="96"/>
        <end position="97"/>
    </location>
    <ligand>
        <name>NAD(+)</name>
        <dbReference type="ChEBI" id="CHEBI:57540"/>
    </ligand>
</feature>
<feature type="binding site" evidence="1">
    <location>
        <position position="122"/>
    </location>
    <ligand>
        <name>NAD(+)</name>
        <dbReference type="ChEBI" id="CHEBI:57540"/>
    </ligand>
</feature>
<feature type="binding site" evidence="1">
    <location>
        <position position="145"/>
    </location>
    <ligand>
        <name>NAD(+)</name>
        <dbReference type="ChEBI" id="CHEBI:57540"/>
    </ligand>
</feature>
<feature type="binding site" evidence="1">
    <location>
        <position position="182"/>
    </location>
    <ligand>
        <name>NAD(+)</name>
        <dbReference type="ChEBI" id="CHEBI:57540"/>
    </ligand>
</feature>
<feature type="binding site" evidence="1">
    <location>
        <position position="300"/>
    </location>
    <ligand>
        <name>NAD(+)</name>
        <dbReference type="ChEBI" id="CHEBI:57540"/>
    </ligand>
</feature>
<feature type="binding site" evidence="1">
    <location>
        <position position="324"/>
    </location>
    <ligand>
        <name>NAD(+)</name>
        <dbReference type="ChEBI" id="CHEBI:57540"/>
    </ligand>
</feature>
<feature type="binding site" evidence="1">
    <location>
        <position position="418"/>
    </location>
    <ligand>
        <name>Zn(2+)</name>
        <dbReference type="ChEBI" id="CHEBI:29105"/>
    </ligand>
</feature>
<feature type="binding site" evidence="1">
    <location>
        <position position="421"/>
    </location>
    <ligand>
        <name>Zn(2+)</name>
        <dbReference type="ChEBI" id="CHEBI:29105"/>
    </ligand>
</feature>
<feature type="binding site" evidence="1">
    <location>
        <position position="436"/>
    </location>
    <ligand>
        <name>Zn(2+)</name>
        <dbReference type="ChEBI" id="CHEBI:29105"/>
    </ligand>
</feature>
<feature type="binding site" evidence="1">
    <location>
        <position position="442"/>
    </location>
    <ligand>
        <name>Zn(2+)</name>
        <dbReference type="ChEBI" id="CHEBI:29105"/>
    </ligand>
</feature>
<proteinExistence type="inferred from homology"/>
<organism>
    <name type="scientific">Francisella tularensis subsp. holarctica (strain LVS)</name>
    <dbReference type="NCBI Taxonomy" id="376619"/>
    <lineage>
        <taxon>Bacteria</taxon>
        <taxon>Pseudomonadati</taxon>
        <taxon>Pseudomonadota</taxon>
        <taxon>Gammaproteobacteria</taxon>
        <taxon>Thiotrichales</taxon>
        <taxon>Francisellaceae</taxon>
        <taxon>Francisella</taxon>
    </lineage>
</organism>
<accession>Q2A4C4</accession>
<dbReference type="EC" id="6.5.1.2" evidence="1"/>
<dbReference type="EMBL" id="AM233362">
    <property type="protein sequence ID" value="CAJ79115.1"/>
    <property type="molecule type" value="Genomic_DNA"/>
</dbReference>
<dbReference type="RefSeq" id="WP_003015112.1">
    <property type="nucleotide sequence ID" value="NZ_CP009694.1"/>
</dbReference>
<dbReference type="SMR" id="Q2A4C4"/>
<dbReference type="KEGG" id="ftl:FTL_0676"/>
<dbReference type="Proteomes" id="UP000001944">
    <property type="component" value="Chromosome"/>
</dbReference>
<dbReference type="GO" id="GO:0005829">
    <property type="term" value="C:cytosol"/>
    <property type="evidence" value="ECO:0007669"/>
    <property type="project" value="TreeGrafter"/>
</dbReference>
<dbReference type="GO" id="GO:0003677">
    <property type="term" value="F:DNA binding"/>
    <property type="evidence" value="ECO:0007669"/>
    <property type="project" value="InterPro"/>
</dbReference>
<dbReference type="GO" id="GO:0003911">
    <property type="term" value="F:DNA ligase (NAD+) activity"/>
    <property type="evidence" value="ECO:0007669"/>
    <property type="project" value="UniProtKB-UniRule"/>
</dbReference>
<dbReference type="GO" id="GO:0046872">
    <property type="term" value="F:metal ion binding"/>
    <property type="evidence" value="ECO:0007669"/>
    <property type="project" value="UniProtKB-KW"/>
</dbReference>
<dbReference type="GO" id="GO:0006281">
    <property type="term" value="P:DNA repair"/>
    <property type="evidence" value="ECO:0007669"/>
    <property type="project" value="UniProtKB-KW"/>
</dbReference>
<dbReference type="GO" id="GO:0006260">
    <property type="term" value="P:DNA replication"/>
    <property type="evidence" value="ECO:0007669"/>
    <property type="project" value="UniProtKB-KW"/>
</dbReference>
<dbReference type="CDD" id="cd17748">
    <property type="entry name" value="BRCT_DNA_ligase_like"/>
    <property type="match status" value="1"/>
</dbReference>
<dbReference type="CDD" id="cd00114">
    <property type="entry name" value="LIGANc"/>
    <property type="match status" value="1"/>
</dbReference>
<dbReference type="FunFam" id="1.10.150.20:FF:000007">
    <property type="entry name" value="DNA ligase"/>
    <property type="match status" value="1"/>
</dbReference>
<dbReference type="FunFam" id="2.40.50.140:FF:000012">
    <property type="entry name" value="DNA ligase"/>
    <property type="match status" value="1"/>
</dbReference>
<dbReference type="FunFam" id="3.30.470.30:FF:000001">
    <property type="entry name" value="DNA ligase"/>
    <property type="match status" value="1"/>
</dbReference>
<dbReference type="Gene3D" id="6.20.10.30">
    <property type="match status" value="1"/>
</dbReference>
<dbReference type="Gene3D" id="1.10.150.20">
    <property type="entry name" value="5' to 3' exonuclease, C-terminal subdomain"/>
    <property type="match status" value="2"/>
</dbReference>
<dbReference type="Gene3D" id="3.40.50.10190">
    <property type="entry name" value="BRCT domain"/>
    <property type="match status" value="1"/>
</dbReference>
<dbReference type="Gene3D" id="3.30.470.30">
    <property type="entry name" value="DNA ligase/mRNA capping enzyme"/>
    <property type="match status" value="1"/>
</dbReference>
<dbReference type="Gene3D" id="1.10.287.610">
    <property type="entry name" value="Helix hairpin bin"/>
    <property type="match status" value="1"/>
</dbReference>
<dbReference type="Gene3D" id="2.40.50.140">
    <property type="entry name" value="Nucleic acid-binding proteins"/>
    <property type="match status" value="1"/>
</dbReference>
<dbReference type="HAMAP" id="MF_01588">
    <property type="entry name" value="DNA_ligase_A"/>
    <property type="match status" value="1"/>
</dbReference>
<dbReference type="InterPro" id="IPR001357">
    <property type="entry name" value="BRCT_dom"/>
</dbReference>
<dbReference type="InterPro" id="IPR036420">
    <property type="entry name" value="BRCT_dom_sf"/>
</dbReference>
<dbReference type="InterPro" id="IPR041663">
    <property type="entry name" value="DisA/LigA_HHH"/>
</dbReference>
<dbReference type="InterPro" id="IPR001679">
    <property type="entry name" value="DNA_ligase"/>
</dbReference>
<dbReference type="InterPro" id="IPR033136">
    <property type="entry name" value="DNA_ligase_CS"/>
</dbReference>
<dbReference type="InterPro" id="IPR013839">
    <property type="entry name" value="DNAligase_adenylation"/>
</dbReference>
<dbReference type="InterPro" id="IPR013840">
    <property type="entry name" value="DNAligase_N"/>
</dbReference>
<dbReference type="InterPro" id="IPR003583">
    <property type="entry name" value="Hlx-hairpin-Hlx_DNA-bd_motif"/>
</dbReference>
<dbReference type="InterPro" id="IPR012340">
    <property type="entry name" value="NA-bd_OB-fold"/>
</dbReference>
<dbReference type="InterPro" id="IPR004150">
    <property type="entry name" value="NAD_DNA_ligase_OB"/>
</dbReference>
<dbReference type="InterPro" id="IPR010994">
    <property type="entry name" value="RuvA_2-like"/>
</dbReference>
<dbReference type="InterPro" id="IPR004149">
    <property type="entry name" value="Znf_DNAligase_C4"/>
</dbReference>
<dbReference type="NCBIfam" id="TIGR00575">
    <property type="entry name" value="dnlj"/>
    <property type="match status" value="1"/>
</dbReference>
<dbReference type="NCBIfam" id="NF005932">
    <property type="entry name" value="PRK07956.1"/>
    <property type="match status" value="1"/>
</dbReference>
<dbReference type="PANTHER" id="PTHR23389">
    <property type="entry name" value="CHROMOSOME TRANSMISSION FIDELITY FACTOR 18"/>
    <property type="match status" value="1"/>
</dbReference>
<dbReference type="PANTHER" id="PTHR23389:SF9">
    <property type="entry name" value="DNA LIGASE"/>
    <property type="match status" value="1"/>
</dbReference>
<dbReference type="Pfam" id="PF00533">
    <property type="entry name" value="BRCT"/>
    <property type="match status" value="1"/>
</dbReference>
<dbReference type="Pfam" id="PF01653">
    <property type="entry name" value="DNA_ligase_aden"/>
    <property type="match status" value="1"/>
</dbReference>
<dbReference type="Pfam" id="PF03120">
    <property type="entry name" value="DNA_ligase_OB"/>
    <property type="match status" value="1"/>
</dbReference>
<dbReference type="Pfam" id="PF03119">
    <property type="entry name" value="DNA_ligase_ZBD"/>
    <property type="match status" value="1"/>
</dbReference>
<dbReference type="Pfam" id="PF12826">
    <property type="entry name" value="HHH_2"/>
    <property type="match status" value="1"/>
</dbReference>
<dbReference type="Pfam" id="PF22745">
    <property type="entry name" value="Nlig-Ia"/>
    <property type="match status" value="1"/>
</dbReference>
<dbReference type="PIRSF" id="PIRSF001604">
    <property type="entry name" value="LigA"/>
    <property type="match status" value="1"/>
</dbReference>
<dbReference type="SMART" id="SM00292">
    <property type="entry name" value="BRCT"/>
    <property type="match status" value="1"/>
</dbReference>
<dbReference type="SMART" id="SM00278">
    <property type="entry name" value="HhH1"/>
    <property type="match status" value="4"/>
</dbReference>
<dbReference type="SMART" id="SM00532">
    <property type="entry name" value="LIGANc"/>
    <property type="match status" value="1"/>
</dbReference>
<dbReference type="SUPFAM" id="SSF52113">
    <property type="entry name" value="BRCT domain"/>
    <property type="match status" value="1"/>
</dbReference>
<dbReference type="SUPFAM" id="SSF56091">
    <property type="entry name" value="DNA ligase/mRNA capping enzyme, catalytic domain"/>
    <property type="match status" value="1"/>
</dbReference>
<dbReference type="SUPFAM" id="SSF50249">
    <property type="entry name" value="Nucleic acid-binding proteins"/>
    <property type="match status" value="1"/>
</dbReference>
<dbReference type="SUPFAM" id="SSF47781">
    <property type="entry name" value="RuvA domain 2-like"/>
    <property type="match status" value="1"/>
</dbReference>
<dbReference type="PROSITE" id="PS50172">
    <property type="entry name" value="BRCT"/>
    <property type="match status" value="1"/>
</dbReference>
<dbReference type="PROSITE" id="PS01056">
    <property type="entry name" value="DNA_LIGASE_N2"/>
    <property type="match status" value="1"/>
</dbReference>
<sequence>MTPNEFFSIKYHILAKAELKAYIDKLADYLSQQSYLYHTLDKPIISDSDYDKLFRLLQDLVNDNPQFKPINSVLDRVGGEVLAGFETIKHKKKMTSLANVFSLEELRDFYDKIEYDIELECEPKMDGLAISIFYKNGKFDYAVTRGDGIQGEKVSENVKTIRNVPLKLNTSNPPEELEVRGEIILDKQSFLSLNEYMQTHENKTFANPRNAAAGSIRMLDSKVVAKRPLKLYSYGIGYFSKDFVYPETQFELMQLLQSFGFTISDNMFLAKNFSEVEEYHHKMSHQRADLAYDIDGLVFKVNNIKLQDTIGYTARGPKWAIAYKFPAEEVESEVLNVEFQVGRTGAITPVARLKPVAVGGVIVSNATLHNINEIKRKDIRVGDRVIVRRAGDVIPEVVKSLPQYRKSDAQIVEMPTNCPVCDSKIENVNDQAIYRCTGGWHCQAQTTERLKHFVSRKAMDIDKLGAKLIEQLVAANLIKYPADIYKLNFEQLTGLERMAAKSSQNVLDSITKSKEPSLARFIFAIGIKDIGEVSSDALANHFGSLESFRDAKFEELIEINYIGEIIANNIVSFWHDSLNIKIVEEFLAIGIKIQNPVKVEHAYNESFTGKTVVITGSFENYGRTELTQLLKSIGAKVTSSVSKKTDMVICGDNAGSKLTKAQELGVEVILEDNLKDLL</sequence>